<comment type="function">
    <text evidence="1 2 3 4 5">Mevalonyl-coenzyme A hydratase; part of the siderophore biosynthetic pathway (PubMed:22106303). Aspergillus fumigatus produces 4 types of siderophores, low-molecular-mass iron chelators, including excreted fusarinine C (FsC) and triacetylfusarinine C (TAFC) for iron uptake and intacellular ferricrocin (FC) for hyphal and hydroxyferricrocin (HFC) for conidial iron distribution and storage. TAFC consists of 3 N(2)-acetyl-N(5)-anhydromevalonyl-N(5)-hydroxyornithine residues cyclically linked by ester bonds; FC is a cyclic hexapeptide with the structure Gly-Ser-Gly-(N(5)-acetyl-N(5)-hydroxyornithine)x3. The biosynthesis of all four siderophores depends on the hydroxylation of ornithine, catalyzed by the monooxygenase sidA (PubMed:15504822, PubMed:16113265). Subsequently, the pathways for biosynthesis of extra- and intracellular siderophores split (PubMed:17845073). For biosynthesis of extracellular siderophores, the transacylase sidF transfers anhydromevalonyl to N(5)-hydroxyornithine (PubMed:17845073). The required anhydromevalonyl-CoA moiety is derived from mevalonate by CoA ligation and dehydration catalyzed by sidI and sidH respectively (PubMed:22106303). The acetylation of N(5)-hydroxyornithine for FC biosynthesis involves the constitutively expressed sidL (PubMed:21622789). FC is hydroxylated to HFC by an as yet uncharacterized enzyme during conidiation (PubMed:17845073). Assembly of fusarinine C (FsC) and FC is catalyzed by two different nonribosomal peptide synthetases (NRPS), sidD and sidC respectively (PubMed:17845073). Subsequently, sidG catalyzes N2-acetylation of FsC for forming TAFC (PubMed:17845073). Both extra- and intracellular siderophores are crucial for growth during iron limitation and virulence (PubMed:16113265).</text>
</comment>
<comment type="pathway">
    <text evidence="5">Siderophore biosynthesis.</text>
</comment>
<comment type="subcellular location">
    <subcellularLocation>
        <location evidence="6">Peroxisome</location>
    </subcellularLocation>
    <text evidence="6">Targeted to peroxisomes via its PTS1-type peroxisomal targeting signal and the corresponding receptor pexE (PubMed:23617799).</text>
</comment>
<comment type="disruption phenotype">
    <text evidence="5">Blocks TAFC biosynthesis, decreases resistance to oxidative stress, and attenuates virulence in a murine model of invasive pulmonary aspergillosis (PubMed:22106303).</text>
</comment>
<comment type="similarity">
    <text evidence="8">Belongs to the enoyl-CoA hydratase/isomerase family.</text>
</comment>
<protein>
    <recommendedName>
        <fullName evidence="7">Mevalonyl-coenzyme A hydratase sidH</fullName>
        <ecNumber evidence="9">4.2.1.-</ecNumber>
    </recommendedName>
    <alternativeName>
        <fullName evidence="7">Siderophore biosynthesis protein H</fullName>
    </alternativeName>
</protein>
<reference key="1">
    <citation type="journal article" date="2005" name="Nature">
        <title>Genomic sequence of the pathogenic and allergenic filamentous fungus Aspergillus fumigatus.</title>
        <authorList>
            <person name="Nierman W.C."/>
            <person name="Pain A."/>
            <person name="Anderson M.J."/>
            <person name="Wortman J.R."/>
            <person name="Kim H.S."/>
            <person name="Arroyo J."/>
            <person name="Berriman M."/>
            <person name="Abe K."/>
            <person name="Archer D.B."/>
            <person name="Bermejo C."/>
            <person name="Bennett J.W."/>
            <person name="Bowyer P."/>
            <person name="Chen D."/>
            <person name="Collins M."/>
            <person name="Coulsen R."/>
            <person name="Davies R."/>
            <person name="Dyer P.S."/>
            <person name="Farman M.L."/>
            <person name="Fedorova N."/>
            <person name="Fedorova N.D."/>
            <person name="Feldblyum T.V."/>
            <person name="Fischer R."/>
            <person name="Fosker N."/>
            <person name="Fraser A."/>
            <person name="Garcia J.L."/>
            <person name="Garcia M.J."/>
            <person name="Goble A."/>
            <person name="Goldman G.H."/>
            <person name="Gomi K."/>
            <person name="Griffith-Jones S."/>
            <person name="Gwilliam R."/>
            <person name="Haas B.J."/>
            <person name="Haas H."/>
            <person name="Harris D.E."/>
            <person name="Horiuchi H."/>
            <person name="Huang J."/>
            <person name="Humphray S."/>
            <person name="Jimenez J."/>
            <person name="Keller N."/>
            <person name="Khouri H."/>
            <person name="Kitamoto K."/>
            <person name="Kobayashi T."/>
            <person name="Konzack S."/>
            <person name="Kulkarni R."/>
            <person name="Kumagai T."/>
            <person name="Lafton A."/>
            <person name="Latge J.-P."/>
            <person name="Li W."/>
            <person name="Lord A."/>
            <person name="Lu C."/>
            <person name="Majoros W.H."/>
            <person name="May G.S."/>
            <person name="Miller B.L."/>
            <person name="Mohamoud Y."/>
            <person name="Molina M."/>
            <person name="Monod M."/>
            <person name="Mouyna I."/>
            <person name="Mulligan S."/>
            <person name="Murphy L.D."/>
            <person name="O'Neil S."/>
            <person name="Paulsen I."/>
            <person name="Penalva M.A."/>
            <person name="Pertea M."/>
            <person name="Price C."/>
            <person name="Pritchard B.L."/>
            <person name="Quail M.A."/>
            <person name="Rabbinowitsch E."/>
            <person name="Rawlins N."/>
            <person name="Rajandream M.A."/>
            <person name="Reichard U."/>
            <person name="Renauld H."/>
            <person name="Robson G.D."/>
            <person name="Rodriguez de Cordoba S."/>
            <person name="Rodriguez-Pena J.M."/>
            <person name="Ronning C.M."/>
            <person name="Rutter S."/>
            <person name="Salzberg S.L."/>
            <person name="Sanchez M."/>
            <person name="Sanchez-Ferrero J.C."/>
            <person name="Saunders D."/>
            <person name="Seeger K."/>
            <person name="Squares R."/>
            <person name="Squares S."/>
            <person name="Takeuchi M."/>
            <person name="Tekaia F."/>
            <person name="Turner G."/>
            <person name="Vazquez de Aldana C.R."/>
            <person name="Weidman J."/>
            <person name="White O."/>
            <person name="Woodward J.R."/>
            <person name="Yu J.-H."/>
            <person name="Fraser C.M."/>
            <person name="Galagan J.E."/>
            <person name="Asai K."/>
            <person name="Machida M."/>
            <person name="Hall N."/>
            <person name="Barrell B.G."/>
            <person name="Denning D.W."/>
        </authorList>
    </citation>
    <scope>NUCLEOTIDE SEQUENCE [LARGE SCALE GENOMIC DNA]</scope>
    <source>
        <strain>ATCC MYA-4609 / CBS 101355 / FGSC A1100 / Af293</strain>
    </source>
</reference>
<reference key="2">
    <citation type="journal article" date="2004" name="J. Exp. Med.">
        <title>Siderophore biosynthesis but not reductive iron assimilation is essential for Aspergillus fumigatus virulence.</title>
        <authorList>
            <person name="Schrettl M."/>
            <person name="Bignell E."/>
            <person name="Kragl C."/>
            <person name="Joechl C."/>
            <person name="Rogers T."/>
            <person name="Arst H.N. Jr."/>
            <person name="Haynes K."/>
            <person name="Haas H."/>
        </authorList>
    </citation>
    <scope>FUNCTION</scope>
</reference>
<reference key="3">
    <citation type="journal article" date="2005" name="Infect. Immun.">
        <title>The Aspergillus fumigatus siderophore biosynthetic gene sidA, encoding L-ornithine N(5)-oxygenase, is required for virulence.</title>
        <authorList>
            <person name="Hissen A.H."/>
            <person name="Wan A.N."/>
            <person name="Warwas M.L."/>
            <person name="Pinto L.J."/>
            <person name="Moore M.M."/>
        </authorList>
    </citation>
    <scope>FUNCTION</scope>
</reference>
<reference key="4">
    <citation type="journal article" date="2007" name="PLoS Pathog.">
        <title>Distinct roles for intra- and extracellular siderophores during Aspergillus fumigatus infection.</title>
        <authorList>
            <person name="Schrettl M."/>
            <person name="Bignell E."/>
            <person name="Kragl C."/>
            <person name="Sabiha Y."/>
            <person name="Loss O."/>
            <person name="Eisendle M."/>
            <person name="Wallner A."/>
            <person name="Arst H.N. Jr."/>
            <person name="Haynes K."/>
            <person name="Haas H."/>
        </authorList>
    </citation>
    <scope>FUNCTION</scope>
</reference>
<reference key="5">
    <citation type="journal article" date="2008" name="Mol. Microbiol.">
        <title>SreA-mediated iron regulation in Aspergillus fumigatus.</title>
        <authorList>
            <person name="Schrettl M."/>
            <person name="Kim H.S."/>
            <person name="Eisendle M."/>
            <person name="Kragl C."/>
            <person name="Nierman W.C."/>
            <person name="Heinekamp T."/>
            <person name="Werner E.R."/>
            <person name="Jacobsen I."/>
            <person name="Illmer P."/>
            <person name="Yi H."/>
            <person name="Brakhage A.A."/>
            <person name="Haas H."/>
        </authorList>
    </citation>
    <scope>INDUCTION</scope>
</reference>
<reference key="6">
    <citation type="journal article" date="2011" name="Appl. Environ. Microbiol.">
        <title>SidL, an Aspergillus fumigatus transacetylase involved in biosynthesis of the siderophores ferricrocin and hydroxyferricrocin.</title>
        <authorList>
            <person name="Blatzer M."/>
            <person name="Schrettl M."/>
            <person name="Sarg B."/>
            <person name="Lindner H.H."/>
            <person name="Pfaller K."/>
            <person name="Haas H."/>
        </authorList>
    </citation>
    <scope>FUNCTION</scope>
</reference>
<reference key="7">
    <citation type="journal article" date="2012" name="Proc. Natl. Acad. Sci. U.S.A.">
        <title>Mevalonate governs interdependency of ergosterol and siderophore biosyntheses in the fungal pathogen Aspergillus fumigatus.</title>
        <authorList>
            <person name="Yasmin S."/>
            <person name="Alcazar-Fuoli L."/>
            <person name="Gruendlinger M."/>
            <person name="Puempel T."/>
            <person name="Cairns T."/>
            <person name="Blatzer M."/>
            <person name="Lopez J.F."/>
            <person name="Grimalt J.O."/>
            <person name="Bignell E."/>
            <person name="Haas H."/>
        </authorList>
    </citation>
    <scope>FUNCTION</scope>
    <scope>DISRUPTION PHENOTYPE</scope>
</reference>
<reference key="8">
    <citation type="journal article" date="2013" name="Mol. Microbiol.">
        <title>Fungal siderophore biosynthesis is partially localized in peroxisomes.</title>
        <authorList>
            <person name="Gruendlinger M."/>
            <person name="Yasmin S."/>
            <person name="Lechner B.E."/>
            <person name="Geley S."/>
            <person name="Schrettl M."/>
            <person name="Hynes M."/>
            <person name="Haas H."/>
        </authorList>
    </citation>
    <scope>SUBCELLULAR LOCATION</scope>
    <scope>PEROXISOMAL TARGETING SIGNAL</scope>
    <scope>FUNCTION</scope>
</reference>
<sequence length="270" mass="29345">MSTEAHPTVQGCLVSFPTPHILLLTLNRPEKRNCISLATSAEIQRLWTWFDTQPALYVAIITGTGESFCAGADLKEWNDLNARGITNEMTAPGLAGLPRRRGSKPIIAAVNGYCLGGGFEMVANCDIVVASENATFGLPEVQRGIAAVAGSLPRLVRVLGKQRAAEIALSGLSFSASQLERWGLVNRVVEHDQLLATAVEIATAISRNSPDSVRVTMEGLHYGWEMASVEEASSALVDQWYAKLMAGENFHEGVRAFVEKRKPQWRPSKL</sequence>
<dbReference type="EC" id="4.2.1.-" evidence="9"/>
<dbReference type="EMBL" id="AAHF01000010">
    <property type="protein sequence ID" value="EAL86623.1"/>
    <property type="molecule type" value="Genomic_DNA"/>
</dbReference>
<dbReference type="RefSeq" id="XP_748661.1">
    <property type="nucleotide sequence ID" value="XM_743568.1"/>
</dbReference>
<dbReference type="PDB" id="7OEQ">
    <property type="method" value="X-ray"/>
    <property type="resolution" value="1.36 A"/>
    <property type="chains" value="A=1-270"/>
</dbReference>
<dbReference type="PDBsum" id="7OEQ"/>
<dbReference type="SMR" id="Q4WF54"/>
<dbReference type="STRING" id="330879.Q4WF54"/>
<dbReference type="EnsemblFungi" id="EAL86623">
    <property type="protein sequence ID" value="EAL86623"/>
    <property type="gene ID" value="AFUA_3G03410"/>
</dbReference>
<dbReference type="GeneID" id="3506153"/>
<dbReference type="KEGG" id="afm:AFUA_3G03410"/>
<dbReference type="VEuPathDB" id="FungiDB:Afu3g03410"/>
<dbReference type="eggNOG" id="KOG1680">
    <property type="taxonomic scope" value="Eukaryota"/>
</dbReference>
<dbReference type="HOGENOM" id="CLU_009834_7_6_1"/>
<dbReference type="InParanoid" id="Q4WF54"/>
<dbReference type="OMA" id="VGRAFCT"/>
<dbReference type="OrthoDB" id="2139957at2759"/>
<dbReference type="PHI-base" id="PHI:2322"/>
<dbReference type="Proteomes" id="UP000002530">
    <property type="component" value="Chromosome 3"/>
</dbReference>
<dbReference type="GO" id="GO:0005739">
    <property type="term" value="C:mitochondrion"/>
    <property type="evidence" value="ECO:0000318"/>
    <property type="project" value="GO_Central"/>
</dbReference>
<dbReference type="GO" id="GO:0005777">
    <property type="term" value="C:peroxisome"/>
    <property type="evidence" value="ECO:0000314"/>
    <property type="project" value="AspGD"/>
</dbReference>
<dbReference type="GO" id="GO:0016853">
    <property type="term" value="F:isomerase activity"/>
    <property type="evidence" value="ECO:0007669"/>
    <property type="project" value="UniProtKB-KW"/>
</dbReference>
<dbReference type="GO" id="GO:0016829">
    <property type="term" value="F:lyase activity"/>
    <property type="evidence" value="ECO:0007669"/>
    <property type="project" value="UniProtKB-KW"/>
</dbReference>
<dbReference type="GO" id="GO:0070301">
    <property type="term" value="P:cellular response to hydrogen peroxide"/>
    <property type="evidence" value="ECO:0000315"/>
    <property type="project" value="AspGD"/>
</dbReference>
<dbReference type="GO" id="GO:0010106">
    <property type="term" value="P:cellular response to iron ion starvation"/>
    <property type="evidence" value="ECO:0000315"/>
    <property type="project" value="AspGD"/>
</dbReference>
<dbReference type="GO" id="GO:0006696">
    <property type="term" value="P:ergosterol biosynthetic process"/>
    <property type="evidence" value="ECO:0000315"/>
    <property type="project" value="AspGD"/>
</dbReference>
<dbReference type="GO" id="GO:0006635">
    <property type="term" value="P:fatty acid beta-oxidation"/>
    <property type="evidence" value="ECO:0000318"/>
    <property type="project" value="GO_Central"/>
</dbReference>
<dbReference type="GO" id="GO:1900551">
    <property type="term" value="P:N',N'',N'''-triacetylfusarinine C biosynthetic process"/>
    <property type="evidence" value="ECO:0000315"/>
    <property type="project" value="AspGD"/>
</dbReference>
<dbReference type="CDD" id="cd06558">
    <property type="entry name" value="crotonase-like"/>
    <property type="match status" value="1"/>
</dbReference>
<dbReference type="FunFam" id="3.90.226.10:FF:000074">
    <property type="entry name" value="Enoyl-CoA hydratase (AFU_orthologue AFUA_2G10650)"/>
    <property type="match status" value="1"/>
</dbReference>
<dbReference type="Gene3D" id="3.90.226.10">
    <property type="entry name" value="2-enoyl-CoA Hydratase, Chain A, domain 1"/>
    <property type="match status" value="1"/>
</dbReference>
<dbReference type="Gene3D" id="1.10.12.10">
    <property type="entry name" value="Lyase 2-enoyl-coa Hydratase, Chain A, domain 2"/>
    <property type="match status" value="1"/>
</dbReference>
<dbReference type="InterPro" id="IPR029045">
    <property type="entry name" value="ClpP/crotonase-like_dom_sf"/>
</dbReference>
<dbReference type="InterPro" id="IPR001753">
    <property type="entry name" value="Enoyl-CoA_hydra/iso"/>
</dbReference>
<dbReference type="InterPro" id="IPR014748">
    <property type="entry name" value="Enoyl-CoA_hydra_C"/>
</dbReference>
<dbReference type="PANTHER" id="PTHR11941">
    <property type="entry name" value="ENOYL-COA HYDRATASE-RELATED"/>
    <property type="match status" value="1"/>
</dbReference>
<dbReference type="PANTHER" id="PTHR11941:SF152">
    <property type="entry name" value="ENOYL-COA HYDRATASE_ISOMERASE FAMILY PROTEIN (AFU_ORTHOLOGUE AFUA_3G03410)"/>
    <property type="match status" value="1"/>
</dbReference>
<dbReference type="Pfam" id="PF00378">
    <property type="entry name" value="ECH_1"/>
    <property type="match status" value="1"/>
</dbReference>
<dbReference type="SUPFAM" id="SSF52096">
    <property type="entry name" value="ClpP/crotonase"/>
    <property type="match status" value="1"/>
</dbReference>
<keyword id="KW-0002">3D-structure</keyword>
<keyword id="KW-0413">Isomerase</keyword>
<keyword id="KW-0456">Lyase</keyword>
<keyword id="KW-0576">Peroxisome</keyword>
<keyword id="KW-1185">Reference proteome</keyword>
<gene>
    <name evidence="7" type="primary">sidH</name>
    <name type="ORF">AFUA_3G03410</name>
</gene>
<organism>
    <name type="scientific">Aspergillus fumigatus (strain ATCC MYA-4609 / CBS 101355 / FGSC A1100 / Af293)</name>
    <name type="common">Neosartorya fumigata</name>
    <dbReference type="NCBI Taxonomy" id="330879"/>
    <lineage>
        <taxon>Eukaryota</taxon>
        <taxon>Fungi</taxon>
        <taxon>Dikarya</taxon>
        <taxon>Ascomycota</taxon>
        <taxon>Pezizomycotina</taxon>
        <taxon>Eurotiomycetes</taxon>
        <taxon>Eurotiomycetidae</taxon>
        <taxon>Eurotiales</taxon>
        <taxon>Aspergillaceae</taxon>
        <taxon>Aspergillus</taxon>
        <taxon>Aspergillus subgen. Fumigati</taxon>
    </lineage>
</organism>
<accession>Q4WF54</accession>
<feature type="chain" id="PRO_0000444396" description="Mevalonyl-coenzyme A hydratase sidH">
    <location>
        <begin position="1"/>
        <end position="270"/>
    </location>
</feature>
<feature type="short sequence motif" description="PTS1-type peroxisomal targeting signal" evidence="6">
    <location>
        <begin position="268"/>
        <end position="270"/>
    </location>
</feature>
<feature type="strand" evidence="10">
    <location>
        <begin position="12"/>
        <end position="18"/>
    </location>
</feature>
<feature type="strand" evidence="10">
    <location>
        <begin position="21"/>
        <end position="26"/>
    </location>
</feature>
<feature type="helix" evidence="10">
    <location>
        <begin position="29"/>
        <end position="31"/>
    </location>
</feature>
<feature type="helix" evidence="10">
    <location>
        <begin position="37"/>
        <end position="52"/>
    </location>
</feature>
<feature type="strand" evidence="10">
    <location>
        <begin position="58"/>
        <end position="62"/>
    </location>
</feature>
<feature type="strand" evidence="10">
    <location>
        <begin position="67"/>
        <end position="69"/>
    </location>
</feature>
<feature type="helix" evidence="10">
    <location>
        <begin position="74"/>
        <end position="78"/>
    </location>
</feature>
<feature type="helix" evidence="10">
    <location>
        <begin position="94"/>
        <end position="96"/>
    </location>
</feature>
<feature type="strand" evidence="10">
    <location>
        <begin position="106"/>
        <end position="110"/>
    </location>
</feature>
<feature type="strand" evidence="10">
    <location>
        <begin position="112"/>
        <end position="115"/>
    </location>
</feature>
<feature type="helix" evidence="10">
    <location>
        <begin position="117"/>
        <end position="123"/>
    </location>
</feature>
<feature type="strand" evidence="10">
    <location>
        <begin position="125"/>
        <end position="131"/>
    </location>
</feature>
<feature type="strand" evidence="10">
    <location>
        <begin position="135"/>
        <end position="137"/>
    </location>
</feature>
<feature type="helix" evidence="10">
    <location>
        <begin position="139"/>
        <end position="143"/>
    </location>
</feature>
<feature type="helix" evidence="10">
    <location>
        <begin position="151"/>
        <end position="159"/>
    </location>
</feature>
<feature type="helix" evidence="10">
    <location>
        <begin position="161"/>
        <end position="170"/>
    </location>
</feature>
<feature type="helix" evidence="10">
    <location>
        <begin position="176"/>
        <end position="181"/>
    </location>
</feature>
<feature type="strand" evidence="10">
    <location>
        <begin position="186"/>
        <end position="189"/>
    </location>
</feature>
<feature type="helix" evidence="10">
    <location>
        <begin position="191"/>
        <end position="193"/>
    </location>
</feature>
<feature type="helix" evidence="10">
    <location>
        <begin position="194"/>
        <end position="206"/>
    </location>
</feature>
<feature type="helix" evidence="10">
    <location>
        <begin position="210"/>
        <end position="222"/>
    </location>
</feature>
<feature type="turn" evidence="10">
    <location>
        <begin position="223"/>
        <end position="225"/>
    </location>
</feature>
<feature type="helix" evidence="10">
    <location>
        <begin position="229"/>
        <end position="246"/>
    </location>
</feature>
<feature type="helix" evidence="10">
    <location>
        <begin position="248"/>
        <end position="258"/>
    </location>
</feature>
<proteinExistence type="evidence at protein level"/>
<evidence type="ECO:0000269" key="1">
    <source>
    </source>
</evidence>
<evidence type="ECO:0000269" key="2">
    <source>
    </source>
</evidence>
<evidence type="ECO:0000269" key="3">
    <source>
    </source>
</evidence>
<evidence type="ECO:0000269" key="4">
    <source>
    </source>
</evidence>
<evidence type="ECO:0000269" key="5">
    <source>
    </source>
</evidence>
<evidence type="ECO:0000269" key="6">
    <source>
    </source>
</evidence>
<evidence type="ECO:0000303" key="7">
    <source>
    </source>
</evidence>
<evidence type="ECO:0000305" key="8"/>
<evidence type="ECO:0000305" key="9">
    <source>
    </source>
</evidence>
<evidence type="ECO:0007829" key="10">
    <source>
        <dbReference type="PDB" id="7OEQ"/>
    </source>
</evidence>
<name>SIDH_ASPFU</name>